<reference key="1">
    <citation type="journal article" date="2009" name="Genome Res.">
        <title>Whole genome sequence of Desulfovibrio magneticus strain RS-1 revealed common gene clusters in magnetotactic bacteria.</title>
        <authorList>
            <person name="Nakazawa H."/>
            <person name="Arakaki A."/>
            <person name="Narita-Yamada S."/>
            <person name="Yashiro I."/>
            <person name="Jinno K."/>
            <person name="Aoki N."/>
            <person name="Tsuruyama A."/>
            <person name="Okamura Y."/>
            <person name="Tanikawa S."/>
            <person name="Fujita N."/>
            <person name="Takeyama H."/>
            <person name="Matsunaga T."/>
        </authorList>
    </citation>
    <scope>NUCLEOTIDE SEQUENCE [LARGE SCALE GENOMIC DNA]</scope>
    <source>
        <strain>ATCC 700980 / DSM 13731 / RS-1</strain>
    </source>
</reference>
<evidence type="ECO:0000255" key="1">
    <source>
        <dbReference type="HAMAP-Rule" id="MF_01325"/>
    </source>
</evidence>
<evidence type="ECO:0000256" key="2">
    <source>
        <dbReference type="SAM" id="MobiDB-lite"/>
    </source>
</evidence>
<evidence type="ECO:0000305" key="3"/>
<keyword id="KW-0687">Ribonucleoprotein</keyword>
<keyword id="KW-0689">Ribosomal protein</keyword>
<keyword id="KW-0694">RNA-binding</keyword>
<keyword id="KW-0699">rRNA-binding</keyword>
<feature type="chain" id="PRO_1000214505" description="Large ribosomal subunit protein uL3">
    <location>
        <begin position="1"/>
        <end position="210"/>
    </location>
</feature>
<feature type="region of interest" description="Disordered" evidence="2">
    <location>
        <begin position="136"/>
        <end position="156"/>
    </location>
</feature>
<comment type="function">
    <text evidence="1">One of the primary rRNA binding proteins, it binds directly near the 3'-end of the 23S rRNA, where it nucleates assembly of the 50S subunit.</text>
</comment>
<comment type="subunit">
    <text evidence="1">Part of the 50S ribosomal subunit. Forms a cluster with proteins L14 and L19.</text>
</comment>
<comment type="similarity">
    <text evidence="1">Belongs to the universal ribosomal protein uL3 family.</text>
</comment>
<dbReference type="EMBL" id="AP010904">
    <property type="protein sequence ID" value="BAH74711.1"/>
    <property type="molecule type" value="Genomic_DNA"/>
</dbReference>
<dbReference type="RefSeq" id="WP_006920467.1">
    <property type="nucleotide sequence ID" value="NC_012796.1"/>
</dbReference>
<dbReference type="SMR" id="C4XLX3"/>
<dbReference type="STRING" id="573370.DMR_12200"/>
<dbReference type="KEGG" id="dma:DMR_12200"/>
<dbReference type="eggNOG" id="COG0087">
    <property type="taxonomic scope" value="Bacteria"/>
</dbReference>
<dbReference type="HOGENOM" id="CLU_044142_4_1_7"/>
<dbReference type="OrthoDB" id="9806135at2"/>
<dbReference type="Proteomes" id="UP000009071">
    <property type="component" value="Chromosome"/>
</dbReference>
<dbReference type="GO" id="GO:0022625">
    <property type="term" value="C:cytosolic large ribosomal subunit"/>
    <property type="evidence" value="ECO:0007669"/>
    <property type="project" value="TreeGrafter"/>
</dbReference>
<dbReference type="GO" id="GO:0019843">
    <property type="term" value="F:rRNA binding"/>
    <property type="evidence" value="ECO:0007669"/>
    <property type="project" value="UniProtKB-UniRule"/>
</dbReference>
<dbReference type="GO" id="GO:0003735">
    <property type="term" value="F:structural constituent of ribosome"/>
    <property type="evidence" value="ECO:0007669"/>
    <property type="project" value="InterPro"/>
</dbReference>
<dbReference type="GO" id="GO:0006412">
    <property type="term" value="P:translation"/>
    <property type="evidence" value="ECO:0007669"/>
    <property type="project" value="UniProtKB-UniRule"/>
</dbReference>
<dbReference type="FunFam" id="2.40.30.10:FF:000004">
    <property type="entry name" value="50S ribosomal protein L3"/>
    <property type="match status" value="1"/>
</dbReference>
<dbReference type="FunFam" id="3.30.160.810:FF:000001">
    <property type="entry name" value="50S ribosomal protein L3"/>
    <property type="match status" value="1"/>
</dbReference>
<dbReference type="Gene3D" id="3.30.160.810">
    <property type="match status" value="1"/>
</dbReference>
<dbReference type="Gene3D" id="2.40.30.10">
    <property type="entry name" value="Translation factors"/>
    <property type="match status" value="1"/>
</dbReference>
<dbReference type="HAMAP" id="MF_01325_B">
    <property type="entry name" value="Ribosomal_uL3_B"/>
    <property type="match status" value="1"/>
</dbReference>
<dbReference type="InterPro" id="IPR000597">
    <property type="entry name" value="Ribosomal_uL3"/>
</dbReference>
<dbReference type="InterPro" id="IPR019927">
    <property type="entry name" value="Ribosomal_uL3_bac/org-type"/>
</dbReference>
<dbReference type="InterPro" id="IPR009000">
    <property type="entry name" value="Transl_B-barrel_sf"/>
</dbReference>
<dbReference type="NCBIfam" id="TIGR03625">
    <property type="entry name" value="L3_bact"/>
    <property type="match status" value="1"/>
</dbReference>
<dbReference type="PANTHER" id="PTHR11229">
    <property type="entry name" value="50S RIBOSOMAL PROTEIN L3"/>
    <property type="match status" value="1"/>
</dbReference>
<dbReference type="PANTHER" id="PTHR11229:SF16">
    <property type="entry name" value="LARGE RIBOSOMAL SUBUNIT PROTEIN UL3C"/>
    <property type="match status" value="1"/>
</dbReference>
<dbReference type="Pfam" id="PF00297">
    <property type="entry name" value="Ribosomal_L3"/>
    <property type="match status" value="1"/>
</dbReference>
<dbReference type="SUPFAM" id="SSF50447">
    <property type="entry name" value="Translation proteins"/>
    <property type="match status" value="1"/>
</dbReference>
<organism>
    <name type="scientific">Solidesulfovibrio magneticus (strain ATCC 700980 / DSM 13731 / RS-1)</name>
    <name type="common">Desulfovibrio magneticus</name>
    <dbReference type="NCBI Taxonomy" id="573370"/>
    <lineage>
        <taxon>Bacteria</taxon>
        <taxon>Pseudomonadati</taxon>
        <taxon>Thermodesulfobacteriota</taxon>
        <taxon>Desulfovibrionia</taxon>
        <taxon>Desulfovibrionales</taxon>
        <taxon>Desulfovibrionaceae</taxon>
        <taxon>Solidesulfovibrio</taxon>
    </lineage>
</organism>
<sequence length="210" mass="22511">MAATLGILGRKLGMTRVFGDDGSIIPVTVIQAGPCPVTQVKNLEKDGYNAMQIGFDEIPERKVNKPEKGHLDKAARGYFRVLKEIRLDGPVPFEQGMDVTVDIFAPGEIVKVTGTSIGKGFAGVMKRWNFAGLKKTHGTEKAHRSGGSIGNNTEPGKVMKGKKMAGHMGARTVTVPSITVVDVRPEMNLILVKGQIPGPRNGVVVVRKQG</sequence>
<proteinExistence type="inferred from homology"/>
<gene>
    <name evidence="1" type="primary">rplC</name>
    <name type="ordered locus">DMR_12200</name>
</gene>
<name>RL3_SOLM1</name>
<protein>
    <recommendedName>
        <fullName evidence="1">Large ribosomal subunit protein uL3</fullName>
    </recommendedName>
    <alternativeName>
        <fullName evidence="3">50S ribosomal protein L3</fullName>
    </alternativeName>
</protein>
<accession>C4XLX3</accession>